<feature type="chain" id="PRO_1000131260" description="UPF0250 protein YbeD">
    <location>
        <begin position="1"/>
        <end position="87"/>
    </location>
</feature>
<sequence length="87" mass="9799">MKTKLNELLEFPTPFTYKVMGQALPELVDQVVEVVQRHAPGDYSPTVKPSSKGNYHSVSITINATHIEQVETLYEELGNIDIVRMVL</sequence>
<organism>
    <name type="scientific">Salmonella schwarzengrund (strain CVM19633)</name>
    <dbReference type="NCBI Taxonomy" id="439843"/>
    <lineage>
        <taxon>Bacteria</taxon>
        <taxon>Pseudomonadati</taxon>
        <taxon>Pseudomonadota</taxon>
        <taxon>Gammaproteobacteria</taxon>
        <taxon>Enterobacterales</taxon>
        <taxon>Enterobacteriaceae</taxon>
        <taxon>Salmonella</taxon>
    </lineage>
</organism>
<proteinExistence type="inferred from homology"/>
<gene>
    <name evidence="1" type="primary">ybeD</name>
    <name type="ordered locus">SeSA_A0796</name>
</gene>
<reference key="1">
    <citation type="journal article" date="2011" name="J. Bacteriol.">
        <title>Comparative genomics of 28 Salmonella enterica isolates: evidence for CRISPR-mediated adaptive sublineage evolution.</title>
        <authorList>
            <person name="Fricke W.F."/>
            <person name="Mammel M.K."/>
            <person name="McDermott P.F."/>
            <person name="Tartera C."/>
            <person name="White D.G."/>
            <person name="Leclerc J.E."/>
            <person name="Ravel J."/>
            <person name="Cebula T.A."/>
        </authorList>
    </citation>
    <scope>NUCLEOTIDE SEQUENCE [LARGE SCALE GENOMIC DNA]</scope>
    <source>
        <strain>CVM19633</strain>
    </source>
</reference>
<comment type="similarity">
    <text evidence="1">Belongs to the UPF0250 family.</text>
</comment>
<evidence type="ECO:0000255" key="1">
    <source>
        <dbReference type="HAMAP-Rule" id="MF_00659"/>
    </source>
</evidence>
<dbReference type="EMBL" id="CP001127">
    <property type="protein sequence ID" value="ACF91911.1"/>
    <property type="molecule type" value="Genomic_DNA"/>
</dbReference>
<dbReference type="RefSeq" id="WP_000850547.1">
    <property type="nucleotide sequence ID" value="NC_011094.1"/>
</dbReference>
<dbReference type="SMR" id="B4TPA7"/>
<dbReference type="GeneID" id="83645644"/>
<dbReference type="KEGG" id="sew:SeSA_A0796"/>
<dbReference type="HOGENOM" id="CLU_161438_2_1_6"/>
<dbReference type="Proteomes" id="UP000001865">
    <property type="component" value="Chromosome"/>
</dbReference>
<dbReference type="GO" id="GO:0005829">
    <property type="term" value="C:cytosol"/>
    <property type="evidence" value="ECO:0007669"/>
    <property type="project" value="TreeGrafter"/>
</dbReference>
<dbReference type="FunFam" id="3.30.70.260:FF:000002">
    <property type="entry name" value="UPF0250 protein YbeD"/>
    <property type="match status" value="1"/>
</dbReference>
<dbReference type="Gene3D" id="3.30.70.260">
    <property type="match status" value="1"/>
</dbReference>
<dbReference type="HAMAP" id="MF_00659">
    <property type="entry name" value="UPF0250"/>
    <property type="match status" value="1"/>
</dbReference>
<dbReference type="InterPro" id="IPR007454">
    <property type="entry name" value="UPF0250_YbeD-like"/>
</dbReference>
<dbReference type="InterPro" id="IPR027471">
    <property type="entry name" value="YbeD-like_sf"/>
</dbReference>
<dbReference type="NCBIfam" id="NF003447">
    <property type="entry name" value="PRK04998.1"/>
    <property type="match status" value="1"/>
</dbReference>
<dbReference type="PANTHER" id="PTHR38036">
    <property type="entry name" value="UPF0250 PROTEIN YBED"/>
    <property type="match status" value="1"/>
</dbReference>
<dbReference type="PANTHER" id="PTHR38036:SF1">
    <property type="entry name" value="UPF0250 PROTEIN YBED"/>
    <property type="match status" value="1"/>
</dbReference>
<dbReference type="Pfam" id="PF04359">
    <property type="entry name" value="DUF493"/>
    <property type="match status" value="1"/>
</dbReference>
<dbReference type="SUPFAM" id="SSF117991">
    <property type="entry name" value="YbeD/HP0495-like"/>
    <property type="match status" value="1"/>
</dbReference>
<accession>B4TPA7</accession>
<name>YBED_SALSV</name>
<protein>
    <recommendedName>
        <fullName evidence="1">UPF0250 protein YbeD</fullName>
    </recommendedName>
</protein>